<sequence length="348" mass="38919">MARTLQGEWMKVEQKGGQVPAPRSSHGIAVIGDKLYCFGGEDPPYESIDNDLYVFDFNTHTWSIAPANGDVPKTRVLGTRMVAVGTKLYVFGGRNKQLEFEDFYSYDTVKEEWKFLTKLDEKGGPEARTFHSMTSDENHVYVFGGVSKGGLNATPFRFRTIEAYNIAEGKWAQLPDPGEDFEKRGMAGFLVVQGKLWVFYGFATANDPKIPTLYGSQDYESNRVHCYDPATQKWTEVETTGFEKPSRRSCFAHAAVGKYIIIFGGEIERDPEAHQGPGTLSREGFALDTETLVWERYEGGPIKPSNRGWVASTTTTINGKKGLLVHGGKLMTNERTDEMYFFAVNSST</sequence>
<name>TFP_THLAR</name>
<gene>
    <name evidence="7" type="primary">TFP</name>
</gene>
<feature type="chain" id="PRO_0000458642" description="N-(sulfonatooxy)prop-2-enimidothioate sulfolyase">
    <location>
        <begin position="1"/>
        <end position="348"/>
    </location>
</feature>
<feature type="repeat" description="Kelch 1" evidence="2">
    <location>
        <begin position="1"/>
        <end position="33"/>
    </location>
</feature>
<feature type="repeat" description="Kelch 2" evidence="2">
    <location>
        <begin position="34"/>
        <end position="85"/>
    </location>
</feature>
<feature type="repeat" description="Kelch 3" evidence="2">
    <location>
        <begin position="87"/>
        <end position="133"/>
    </location>
</feature>
<feature type="repeat" description="Kelch 4" evidence="2">
    <location>
        <begin position="139"/>
        <end position="194"/>
    </location>
</feature>
<feature type="repeat" description="Kelch 5" evidence="2">
    <location>
        <begin position="209"/>
        <end position="254"/>
    </location>
</feature>
<feature type="repeat" description="Kelch 6" evidence="2">
    <location>
        <begin position="259"/>
        <end position="314"/>
    </location>
</feature>
<feature type="repeat" description="Kelch 7" evidence="2">
    <location>
        <begin position="322"/>
        <end position="348"/>
    </location>
</feature>
<feature type="active site" description="Proton donor" evidence="5 9 11 12">
    <location>
        <position position="94"/>
    </location>
</feature>
<feature type="active site" description="Proton donor" evidence="5 11 12">
    <location>
        <position position="157"/>
    </location>
</feature>
<feature type="active site" description="Proton acceptor" evidence="12">
    <location>
        <position position="220"/>
    </location>
</feature>
<feature type="binding site" evidence="9">
    <location>
        <position position="46"/>
    </location>
    <ligand>
        <name>a (Z)-N-(sulfonatooxy)alkanimidothioate</name>
        <dbReference type="ChEBI" id="CHEBI:183089"/>
    </ligand>
    <ligandPart>
        <name>sulfur</name>
        <dbReference type="ChEBI" id="CHEBI:26833"/>
    </ligandPart>
</feature>
<feature type="binding site" evidence="9 10 11 12">
    <location>
        <position position="94"/>
    </location>
    <ligand>
        <name>a (Z)-N-(sulfonatooxy)alkanimidothioate</name>
        <dbReference type="ChEBI" id="CHEBI:183089"/>
    </ligand>
    <ligandPart>
        <name>sulfur</name>
        <dbReference type="ChEBI" id="CHEBI:26833"/>
    </ligandPart>
</feature>
<feature type="binding site" evidence="11">
    <location>
        <position position="129"/>
    </location>
    <ligand>
        <name>a (Z)-N-(sulfonatooxy)alkanimidothioate</name>
        <dbReference type="ChEBI" id="CHEBI:183089"/>
    </ligand>
</feature>
<feature type="binding site" evidence="9 10 12">
    <location>
        <position position="130"/>
    </location>
    <ligand>
        <name>a (Z)-N-(sulfonatooxy)alkanimidothioate</name>
        <dbReference type="ChEBI" id="CHEBI:183089"/>
    </ligand>
</feature>
<feature type="binding site" evidence="10 11 12">
    <location>
        <position position="157"/>
    </location>
    <ligand>
        <name>a (Z)-N-(sulfonatooxy)alkanimidothioate</name>
        <dbReference type="ChEBI" id="CHEBI:183089"/>
    </ligand>
    <ligandPart>
        <name>sulfur</name>
        <dbReference type="ChEBI" id="CHEBI:26833"/>
    </ligandPart>
</feature>
<feature type="binding site" evidence="9 10 11 12">
    <location>
        <position position="266"/>
    </location>
    <ligand>
        <name>Fe(2+)</name>
        <dbReference type="ChEBI" id="CHEBI:29033"/>
    </ligand>
</feature>
<feature type="binding site" evidence="9 11">
    <location>
        <position position="269"/>
    </location>
    <ligand>
        <name>a (Z)-N-(sulfonatooxy)alkanimidothioate</name>
        <dbReference type="ChEBI" id="CHEBI:183089"/>
    </ligand>
    <ligandPart>
        <name>sulfur</name>
        <dbReference type="ChEBI" id="CHEBI:26833"/>
    </ligandPart>
</feature>
<feature type="binding site" evidence="9 10 11 12">
    <location>
        <position position="270"/>
    </location>
    <ligand>
        <name>Fe(2+)</name>
        <dbReference type="ChEBI" id="CHEBI:29033"/>
    </ligand>
</feature>
<feature type="binding site" evidence="9 10 11 12">
    <location>
        <position position="274"/>
    </location>
    <ligand>
        <name>Fe(2+)</name>
        <dbReference type="ChEBI" id="CHEBI:29033"/>
    </ligand>
</feature>
<feature type="binding site" evidence="10 11 12">
    <location>
        <position position="309"/>
    </location>
    <ligand>
        <name>a (Z)-N-(sulfonatooxy)alkanimidothioate</name>
        <dbReference type="ChEBI" id="CHEBI:183089"/>
    </ligand>
</feature>
<feature type="binding site" evidence="9">
    <location>
        <position position="310"/>
    </location>
    <ligand>
        <name>a (Z)-N-(sulfonatooxy)alkanimidothioate</name>
        <dbReference type="ChEBI" id="CHEBI:183089"/>
    </ligand>
</feature>
<feature type="site" description="Essential for catalytic activity" evidence="6">
    <location>
        <position position="45"/>
    </location>
</feature>
<feature type="site" description="Critical for thiocyanate and epithionitrile formation with allylglucosinolate in the presence of myrosinase" evidence="6">
    <location>
        <position position="154"/>
    </location>
</feature>
<feature type="mutagenesis site" description="Lost activity." evidence="6">
    <original>Y</original>
    <variation>F</variation>
    <location>
        <position position="45"/>
    </location>
</feature>
<feature type="mutagenesis site" description="Strongly reduced activity." evidence="4 6">
    <original>Y</original>
    <variation>N</variation>
    <location>
        <position position="45"/>
    </location>
</feature>
<feature type="mutagenesis site" description="Reduced activity." evidence="4">
    <original>E</original>
    <variation>F</variation>
    <variation>K</variation>
    <location>
        <position position="46"/>
    </location>
</feature>
<feature type="mutagenesis site" description="Increased activity with allylglucosinolate but reduced acticity with benzylglucosinolate in the presence of myrosinase, thus leading to increased proportion of epithionitrile and accumulation of simple nitrile at the expense of thiocyanate and allylthiocyanate. Strongly reduced ability to form allylthiocyanate; when associated with A-157. Strongly reduced activity; when associated with A-269." evidence="4 5">
    <original>R</original>
    <variation>A</variation>
    <location>
        <position position="94"/>
    </location>
</feature>
<feature type="mutagenesis site" description="Increased activity with allylglucosinolate but reduced acticity with benzylglucosinolate in the presence of myrosinase." evidence="4">
    <original>R</original>
    <variation>K</variation>
    <location>
        <position position="94"/>
    </location>
</feature>
<feature type="mutagenesis site" description="Lost activity." evidence="4">
    <original>F</original>
    <variation>A</variation>
    <location>
        <position position="130"/>
    </location>
</feature>
<feature type="mutagenesis site" description="Normal activity." evidence="6">
    <original>L</original>
    <variation>A</variation>
    <location>
        <position position="151"/>
    </location>
</feature>
<feature type="mutagenesis site" description="Normal activity but slightly reduced proportion of thiocyanate in favor of epithionitrile formation. Increased activity leading to lower production of isothiocyanate but reduced proportion of thiocyanate in favor of epithionitrile formation; when associated with M-152 and N-153." evidence="6">
    <original>L</original>
    <variation>T</variation>
    <location>
        <position position="151"/>
    </location>
</feature>
<feature type="mutagenesis site" description="Slightly reduced activity with a lower proportion of thiocyanate formation." evidence="6">
    <original>N</original>
    <variation>A</variation>
    <location>
        <position position="152"/>
    </location>
</feature>
<feature type="mutagenesis site" description="Normal activity but slightly reduced proportion of thiocyanate in favor of epithionitrile formation. Increased activity leading to lower production of isothiocyanate but reduced proportion of thiocyanate in favor of epithionitrile formation; when associated with T-151 and N-153." evidence="6">
    <original>N</original>
    <variation>M</variation>
    <location>
        <position position="152"/>
    </location>
</feature>
<feature type="mutagenesis site" description="Normal activity but slightly reduced proportion of thiocyanate in favor of epithionitrile formation. Increased activity leading to lower production of isothiocyanate but reduced proportion of thiocyanate in favor of epithionitrile formation; when associated with T-151 and M-152." evidence="6">
    <original>A</original>
    <variation>N</variation>
    <location>
        <position position="153"/>
    </location>
</feature>
<feature type="mutagenesis site" description="Modified product profile with increased levels of simple nitrile at the expense of thiocyanate and epithionitrile." evidence="6">
    <original>T</original>
    <variation>A</variation>
    <location>
        <position position="154"/>
    </location>
</feature>
<feature type="mutagenesis site" description="Reduced ability to form allylthiocyanate. Strongly reduced ability to form allylthiocyanate; when associated with A-94." evidence="5">
    <original>R</original>
    <variation>A</variation>
    <location>
        <position position="157"/>
    </location>
</feature>
<feature type="mutagenesis site" description="Increased activity." evidence="4">
    <original>M</original>
    <variation>G</variation>
    <location>
        <position position="186"/>
    </location>
</feature>
<feature type="mutagenesis site" description="Modified product profile with increased levels of epithionitrile at the expense of isothiocyanate." evidence="6">
    <original>S</original>
    <variation>T</variation>
    <location>
        <position position="216"/>
    </location>
</feature>
<feature type="mutagenesis site" description="Reduced activity." evidence="4">
    <original>C</original>
    <variation>V</variation>
    <location>
        <position position="250"/>
    </location>
</feature>
<feature type="mutagenesis site" description="Lost activity." evidence="4 5">
    <original>E</original>
    <variation>Q</variation>
    <location>
        <position position="266"/>
    </location>
</feature>
<feature type="mutagenesis site" description="Strongly reduced activity. Strongly reduced activity; when associated with A-94." evidence="4">
    <original>R</original>
    <variation>A</variation>
    <location>
        <position position="269"/>
    </location>
</feature>
<feature type="mutagenesis site" description="Lost activity." evidence="4 5">
    <original>D</original>
    <variation>A</variation>
    <variation>N</variation>
    <location>
        <position position="270"/>
    </location>
</feature>
<feature type="mutagenesis site" description="Sligthly reduced activity with reduced formation of epithionitrile and thiocyanate, but accumulation of isothiocyanate." evidence="6">
    <original>E</original>
    <variation>A</variation>
    <location>
        <position position="272"/>
    </location>
</feature>
<feature type="mutagenesis site" description="Modified product profile with increased levels of epithionitrile and simple nitrile at the expense of isothiocyanate and thiocyanate." evidence="6">
    <original>A</original>
    <variation>L</variation>
    <location>
        <position position="273"/>
    </location>
</feature>
<feature type="mutagenesis site" description="Lost activity." evidence="5">
    <original>H</original>
    <variation>C</variation>
    <variation>G</variation>
    <variation>E</variation>
    <location>
        <position position="274"/>
    </location>
</feature>
<feature type="mutagenesis site" description="Strongly reduced activity." evidence="4">
    <original>N</original>
    <variation>P</variation>
    <location>
        <position position="306"/>
    </location>
</feature>
<feature type="mutagenesis site" description="Lost activity." evidence="5">
    <original>W</original>
    <variation>A</variation>
    <variation>F</variation>
    <location>
        <position position="309"/>
    </location>
</feature>
<feature type="strand" evidence="13">
    <location>
        <begin position="7"/>
        <end position="11"/>
    </location>
</feature>
<feature type="strand" evidence="13">
    <location>
        <begin position="16"/>
        <end position="18"/>
    </location>
</feature>
<feature type="strand" evidence="13">
    <location>
        <begin position="27"/>
        <end position="31"/>
    </location>
</feature>
<feature type="strand" evidence="13">
    <location>
        <begin position="34"/>
        <end position="38"/>
    </location>
</feature>
<feature type="strand" evidence="13">
    <location>
        <begin position="53"/>
        <end position="56"/>
    </location>
</feature>
<feature type="turn" evidence="13">
    <location>
        <begin position="57"/>
        <end position="60"/>
    </location>
</feature>
<feature type="strand" evidence="13">
    <location>
        <begin position="61"/>
        <end position="64"/>
    </location>
</feature>
<feature type="strand" evidence="13">
    <location>
        <begin position="80"/>
        <end position="84"/>
    </location>
</feature>
<feature type="strand" evidence="13">
    <location>
        <begin position="87"/>
        <end position="91"/>
    </location>
</feature>
<feature type="strand" evidence="13">
    <location>
        <begin position="103"/>
        <end position="107"/>
    </location>
</feature>
<feature type="turn" evidence="13">
    <location>
        <begin position="108"/>
        <end position="111"/>
    </location>
</feature>
<feature type="strand" evidence="13">
    <location>
        <begin position="112"/>
        <end position="117"/>
    </location>
</feature>
<feature type="strand" evidence="13">
    <location>
        <begin position="128"/>
        <end position="130"/>
    </location>
</feature>
<feature type="strand" evidence="13">
    <location>
        <begin position="132"/>
        <end position="135"/>
    </location>
</feature>
<feature type="strand" evidence="13">
    <location>
        <begin position="137"/>
        <end position="143"/>
    </location>
</feature>
<feature type="strand" evidence="13">
    <location>
        <begin position="161"/>
        <end position="165"/>
    </location>
</feature>
<feature type="turn" evidence="13">
    <location>
        <begin position="166"/>
        <end position="169"/>
    </location>
</feature>
<feature type="strand" evidence="13">
    <location>
        <begin position="170"/>
        <end position="173"/>
    </location>
</feature>
<feature type="strand" evidence="13">
    <location>
        <begin position="184"/>
        <end position="186"/>
    </location>
</feature>
<feature type="strand" evidence="13">
    <location>
        <begin position="188"/>
        <end position="192"/>
    </location>
</feature>
<feature type="strand" evidence="13">
    <location>
        <begin position="195"/>
        <end position="203"/>
    </location>
</feature>
<feature type="strand" evidence="13">
    <location>
        <begin position="219"/>
        <end position="227"/>
    </location>
</feature>
<feature type="turn" evidence="13">
    <location>
        <begin position="229"/>
        <end position="231"/>
    </location>
</feature>
<feature type="strand" evidence="13">
    <location>
        <begin position="234"/>
        <end position="236"/>
    </location>
</feature>
<feature type="strand" evidence="13">
    <location>
        <begin position="252"/>
        <end position="256"/>
    </location>
</feature>
<feature type="strand" evidence="13">
    <location>
        <begin position="259"/>
        <end position="263"/>
    </location>
</feature>
<feature type="strand" evidence="13">
    <location>
        <begin position="266"/>
        <end position="268"/>
    </location>
</feature>
<feature type="turn" evidence="14">
    <location>
        <begin position="271"/>
        <end position="274"/>
    </location>
</feature>
<feature type="strand" evidence="13">
    <location>
        <begin position="284"/>
        <end position="288"/>
    </location>
</feature>
<feature type="turn" evidence="13">
    <location>
        <begin position="289"/>
        <end position="291"/>
    </location>
</feature>
<feature type="strand" evidence="13">
    <location>
        <begin position="293"/>
        <end position="297"/>
    </location>
</feature>
<feature type="strand" evidence="13">
    <location>
        <begin position="306"/>
        <end position="309"/>
    </location>
</feature>
<feature type="strand" evidence="13">
    <location>
        <begin position="311"/>
        <end position="317"/>
    </location>
</feature>
<feature type="strand" evidence="13">
    <location>
        <begin position="320"/>
        <end position="326"/>
    </location>
</feature>
<feature type="strand" evidence="13">
    <location>
        <begin position="339"/>
        <end position="344"/>
    </location>
</feature>
<protein>
    <recommendedName>
        <fullName evidence="8">N-(sulfonatooxy)prop-2-enimidothioate sulfolyase</fullName>
        <ecNumber evidence="3">4.8.1.8</ecNumber>
    </recommendedName>
    <alternativeName>
        <fullName evidence="7">Thiocyanate-forming protein</fullName>
        <shortName evidence="7">TaTFP</shortName>
    </alternativeName>
</protein>
<reference key="1">
    <citation type="journal article" date="2011" name="Phytochemistry">
        <title>A thiocyanate-forming protein generates multiple products upon allylglucosinolate breakdown in Thlaspi arvense.</title>
        <authorList>
            <person name="Kuchernig J.-C."/>
            <person name="Backenkoehler A."/>
            <person name="Luebbecke M."/>
            <person name="Burow M."/>
            <person name="Wittstock U."/>
        </authorList>
    </citation>
    <scope>NUCLEOTIDE SEQUENCE [MRNA]</scope>
    <scope>FUNCTION</scope>
    <scope>CATALYTIC ACTIVITY</scope>
    <scope>TISSUE SPECIFICITY</scope>
    <scope>ACTIVITY REGULATION</scope>
    <scope>BIOPHYSICOCHEMICAL PROPERTIES</scope>
    <scope>COFACTOR</scope>
    <source>
        <tissue>Leaf</tissue>
    </source>
</reference>
<reference key="2">
    <citation type="journal article" date="2014" name="Plant Mol. Biol.">
        <title>Molecular models and mutational analyses of plant specifier proteins suggest active site residues and reaction mechanism.</title>
        <authorList>
            <person name="Brandt W."/>
            <person name="Backenkoehler A."/>
            <person name="Schulze E."/>
            <person name="Plock A."/>
            <person name="Herberg T."/>
            <person name="Roese E."/>
            <person name="Wittstock U."/>
        </authorList>
    </citation>
    <scope>FUNCTION</scope>
    <scope>MUTAGENESIS OF TYR-45; GLU-46; ARG-94; PHE-130; MET-186; CYS-250; GLU-266; ARG-269; ASP-270 AND ASN-306</scope>
    <scope>SUBSTRATE BINDING</scope>
    <scope>IRON BINDING</scope>
    <scope>ACTIVE SITE</scope>
</reference>
<reference key="3">
    <citation type="journal article" date="2017" name="Biochem. Biophys. Res. Commun.">
        <title>Crystal structure of the nitrile-specifier protein NSP1 from Arabidopsis thaliana.</title>
        <authorList>
            <person name="Zhang W."/>
            <person name="Zhou Y."/>
            <person name="Wang K."/>
            <person name="Dong Y."/>
            <person name="Wang W."/>
            <person name="Feng Y."/>
        </authorList>
    </citation>
    <scope>ACTIVE SITE</scope>
    <scope>IRON BINDING</scope>
    <scope>SUBSTRATE BINDING</scope>
</reference>
<reference key="4">
    <citation type="journal article" date="2019" name="Plant J.">
        <title>Structural diversification during glucosinolate breakdown: mechanisms of thiocyanate, epithionitrile and simple nitrile formation.</title>
        <authorList>
            <person name="Eisenschmidt-Boenn D."/>
            <person name="Schneegans N."/>
            <person name="Backenkoehler A."/>
            <person name="Wittstock U."/>
            <person name="Brandt W."/>
        </authorList>
    </citation>
    <scope>FUNCTION</scope>
    <scope>MUTAGENESIS OF TYR-45; LEU-151; ASN-152; ALA-153; THR-154; SER-216; GLU-272 AND ALA-273</scope>
    <scope>ACTIVITY REGULATION</scope>
    <scope>SUBSTRATE BINDING</scope>
    <scope>IRON BINDING</scope>
    <scope>ACTIVE SITE</scope>
    <scope>COFACTOR</scope>
</reference>
<reference key="5">
    <citation type="journal article" date="2015" name="Plant Mol. Biol.">
        <title>The crystal structure of the thiocyanate-forming protein from Thlaspi arvense, a kelch protein involved in glucosinolate breakdown.</title>
        <authorList>
            <person name="Gumz F."/>
            <person name="Krausze J."/>
            <person name="Eisenschmidt D."/>
            <person name="Backenkoehler A."/>
            <person name="Barleben L."/>
            <person name="Brandt W."/>
            <person name="Wittstock U."/>
        </authorList>
    </citation>
    <scope>X-RAY CRYSTALLOGRAPHY (1.42 ANGSTROMS)</scope>
    <scope>FUNCTION</scope>
    <scope>MUTAGENESIS OF ARG-94; ARG-157; GLU-266; ASP-270; HIS-274 AND TRP-309</scope>
    <scope>SUBUNIT</scope>
    <scope>ACTIVE SITE</scope>
    <scope>SUBSTRATE BINDING</scope>
    <scope>IRON BINDING</scope>
    <scope>COFACTOR</scope>
</reference>
<proteinExistence type="evidence at protein level"/>
<organism>
    <name type="scientific">Thlaspi arvense</name>
    <name type="common">Field penny-cress</name>
    <dbReference type="NCBI Taxonomy" id="13288"/>
    <lineage>
        <taxon>Eukaryota</taxon>
        <taxon>Viridiplantae</taxon>
        <taxon>Streptophyta</taxon>
        <taxon>Embryophyta</taxon>
        <taxon>Tracheophyta</taxon>
        <taxon>Spermatophyta</taxon>
        <taxon>Magnoliopsida</taxon>
        <taxon>eudicotyledons</taxon>
        <taxon>Gunneridae</taxon>
        <taxon>Pentapetalae</taxon>
        <taxon>rosids</taxon>
        <taxon>malvids</taxon>
        <taxon>Brassicales</taxon>
        <taxon>Brassicaceae</taxon>
        <taxon>Thlaspideae</taxon>
        <taxon>Thlaspi</taxon>
    </lineage>
</organism>
<evidence type="ECO:0000250" key="1">
    <source>
        <dbReference type="UniProtKB" id="Q93XW5"/>
    </source>
</evidence>
<evidence type="ECO:0000255" key="2"/>
<evidence type="ECO:0000269" key="3">
    <source>
    </source>
</evidence>
<evidence type="ECO:0000269" key="4">
    <source>
    </source>
</evidence>
<evidence type="ECO:0000269" key="5">
    <source>
    </source>
</evidence>
<evidence type="ECO:0000269" key="6">
    <source>
    </source>
</evidence>
<evidence type="ECO:0000303" key="7">
    <source>
    </source>
</evidence>
<evidence type="ECO:0000305" key="8"/>
<evidence type="ECO:0000305" key="9">
    <source>
    </source>
</evidence>
<evidence type="ECO:0000305" key="10">
    <source>
    </source>
</evidence>
<evidence type="ECO:0000305" key="11">
    <source>
    </source>
</evidence>
<evidence type="ECO:0000305" key="12">
    <source>
    </source>
</evidence>
<evidence type="ECO:0007829" key="13">
    <source>
        <dbReference type="PDB" id="5A10"/>
    </source>
</evidence>
<evidence type="ECO:0007829" key="14">
    <source>
        <dbReference type="PDB" id="5A11"/>
    </source>
</evidence>
<dbReference type="EC" id="4.8.1.8" evidence="3"/>
<dbReference type="EMBL" id="JN244735">
    <property type="protein sequence ID" value="AEL16674.1"/>
    <property type="molecule type" value="mRNA"/>
</dbReference>
<dbReference type="PDB" id="5A10">
    <property type="method" value="X-ray"/>
    <property type="resolution" value="1.42 A"/>
    <property type="chains" value="A=1-348"/>
</dbReference>
<dbReference type="PDB" id="5A11">
    <property type="method" value="X-ray"/>
    <property type="resolution" value="2.47 A"/>
    <property type="chains" value="A/B=1-348"/>
</dbReference>
<dbReference type="PDBsum" id="5A10"/>
<dbReference type="PDBsum" id="5A11"/>
<dbReference type="SMR" id="G1FNI6"/>
<dbReference type="KEGG" id="ag:AEL16674"/>
<dbReference type="EvolutionaryTrace" id="G1FNI6"/>
<dbReference type="GO" id="GO:0005829">
    <property type="term" value="C:cytosol"/>
    <property type="evidence" value="ECO:0007669"/>
    <property type="project" value="TreeGrafter"/>
</dbReference>
<dbReference type="GO" id="GO:0005634">
    <property type="term" value="C:nucleus"/>
    <property type="evidence" value="ECO:0007669"/>
    <property type="project" value="TreeGrafter"/>
</dbReference>
<dbReference type="GO" id="GO:0030234">
    <property type="term" value="F:enzyme regulator activity"/>
    <property type="evidence" value="ECO:0007669"/>
    <property type="project" value="TreeGrafter"/>
</dbReference>
<dbReference type="GO" id="GO:0042802">
    <property type="term" value="F:identical protein binding"/>
    <property type="evidence" value="ECO:0000314"/>
    <property type="project" value="UniProtKB"/>
</dbReference>
<dbReference type="GO" id="GO:0016829">
    <property type="term" value="F:lyase activity"/>
    <property type="evidence" value="ECO:0007669"/>
    <property type="project" value="UniProtKB-KW"/>
</dbReference>
<dbReference type="GO" id="GO:0046872">
    <property type="term" value="F:metal ion binding"/>
    <property type="evidence" value="ECO:0007669"/>
    <property type="project" value="UniProtKB-KW"/>
</dbReference>
<dbReference type="GO" id="GO:0042803">
    <property type="term" value="F:protein homodimerization activity"/>
    <property type="evidence" value="ECO:0000314"/>
    <property type="project" value="UniProtKB"/>
</dbReference>
<dbReference type="GO" id="GO:0019760">
    <property type="term" value="P:glucosinolate metabolic process"/>
    <property type="evidence" value="ECO:0000314"/>
    <property type="project" value="UniProtKB"/>
</dbReference>
<dbReference type="GO" id="GO:0080028">
    <property type="term" value="P:nitrile biosynthetic process"/>
    <property type="evidence" value="ECO:0007669"/>
    <property type="project" value="TreeGrafter"/>
</dbReference>
<dbReference type="Gene3D" id="2.120.10.80">
    <property type="entry name" value="Kelch-type beta propeller"/>
    <property type="match status" value="2"/>
</dbReference>
<dbReference type="InterPro" id="IPR015915">
    <property type="entry name" value="Kelch-typ_b-propeller"/>
</dbReference>
<dbReference type="PANTHER" id="PTHR47435:SF7">
    <property type="entry name" value="EPITHIOSPECIFIER PROTEIN"/>
    <property type="match status" value="1"/>
</dbReference>
<dbReference type="PANTHER" id="PTHR47435">
    <property type="entry name" value="KELCH REPEAT PROTEIN (AFU_ORTHOLOGUE AFUA_5G12780)"/>
    <property type="match status" value="1"/>
</dbReference>
<dbReference type="Pfam" id="PF24681">
    <property type="entry name" value="Kelch_KLHDC2_KLHL20_DRC7"/>
    <property type="match status" value="1"/>
</dbReference>
<dbReference type="SUPFAM" id="SSF117281">
    <property type="entry name" value="Kelch motif"/>
    <property type="match status" value="1"/>
</dbReference>
<keyword id="KW-0002">3D-structure</keyword>
<keyword id="KW-0408">Iron</keyword>
<keyword id="KW-0880">Kelch repeat</keyword>
<keyword id="KW-0456">Lyase</keyword>
<keyword id="KW-0479">Metal-binding</keyword>
<keyword id="KW-0677">Repeat</keyword>
<comment type="function">
    <text evidence="1 3 4 5 6">Specifier protein that contributes to constitutive and herbivore-induced simple nitrile formation (By similarity). Catalyzes allylthiocyanate and corresponding epithionitrile formation from allylglucosinolate in the presence of myrosinase (PubMed:21783213, PubMed:23999604, PubMed:26260516, PubMed:30900313). Also converts aliphatic glucosinolates, such as indol-3-ylmethylglucosinolate, 4-methylsulfinylbutylglucosinolate, 4-methylthiobutyl- and benzylisothiocyanate, to simple nitriles (PubMed:21783213).</text>
</comment>
<comment type="catalytic activity">
    <reaction evidence="3">
        <text>(Z)-N-(sulfonatooxy)prop-2-enimidothioate = allyl thiocyanate + sulfate</text>
        <dbReference type="Rhea" id="RHEA:69316"/>
        <dbReference type="ChEBI" id="CHEBI:16189"/>
        <dbReference type="ChEBI" id="CHEBI:183062"/>
        <dbReference type="ChEBI" id="CHEBI:183082"/>
        <dbReference type="EC" id="4.8.1.8"/>
    </reaction>
</comment>
<comment type="catalytic activity">
    <reaction evidence="3">
        <text>(Z)-N-(sulfonatooxy)prop-2-enimidothioate = 2-(thiiran-2-yl)acetonitrile + sulfate</text>
        <dbReference type="Rhea" id="RHEA:69252"/>
        <dbReference type="ChEBI" id="CHEBI:16189"/>
        <dbReference type="ChEBI" id="CHEBI:183062"/>
        <dbReference type="ChEBI" id="CHEBI:183064"/>
        <dbReference type="EC" id="4.8.1.8"/>
    </reaction>
</comment>
<comment type="catalytic activity">
    <reaction evidence="3">
        <text>(Z)-N-(sulfonatooxy)prop-2-enimidothioate = allyl isothiocyanate + sulfate</text>
        <dbReference type="Rhea" id="RHEA:69272"/>
        <dbReference type="ChEBI" id="CHEBI:16189"/>
        <dbReference type="ChEBI" id="CHEBI:73224"/>
        <dbReference type="ChEBI" id="CHEBI:183062"/>
    </reaction>
</comment>
<comment type="catalytic activity">
    <reaction evidence="3">
        <text>(Z)-phenyl-N-(sulfonatooxy)methanimidothioate = phenylacetonitrile + sulfur + sulfate</text>
        <dbReference type="Rhea" id="RHEA:69308"/>
        <dbReference type="ChEBI" id="CHEBI:16189"/>
        <dbReference type="ChEBI" id="CHEBI:25979"/>
        <dbReference type="ChEBI" id="CHEBI:26833"/>
        <dbReference type="ChEBI" id="CHEBI:183061"/>
    </reaction>
</comment>
<comment type="catalytic activity">
    <reaction evidence="3">
        <text>glucoerucin + H2O = (Z)-4-methylsulfanylbutyl-N-(sulfonatooxy)methanimidothioate + D-glucose</text>
        <dbReference type="Rhea" id="RHEA:69320"/>
        <dbReference type="ChEBI" id="CHEBI:4167"/>
        <dbReference type="ChEBI" id="CHEBI:5404"/>
        <dbReference type="ChEBI" id="CHEBI:15377"/>
        <dbReference type="ChEBI" id="CHEBI:183222"/>
    </reaction>
</comment>
<comment type="catalytic activity">
    <reaction evidence="3">
        <text>(Z)-4-methylsulfanylbutyl-N-(sulfonatooxy)methanimidothioate = 5-(methylsulfanyl)pentanenitrile + sulfur + sulfate + H(+)</text>
        <dbReference type="Rhea" id="RHEA:69328"/>
        <dbReference type="ChEBI" id="CHEBI:15378"/>
        <dbReference type="ChEBI" id="CHEBI:16189"/>
        <dbReference type="ChEBI" id="CHEBI:26833"/>
        <dbReference type="ChEBI" id="CHEBI:183222"/>
        <dbReference type="ChEBI" id="CHEBI:183223"/>
    </reaction>
</comment>
<comment type="cofactor">
    <cofactor evidence="3 5 6">
        <name>Fe(2+)</name>
        <dbReference type="ChEBI" id="CHEBI:29033"/>
    </cofactor>
</comment>
<comment type="activity regulation">
    <text evidence="3 6">Stimulated by the presence of Fe(2+) leading to an increase formation of both thiocyanate and epithionitrile with allylglucosinolate as substrate in the presence of myrosinase (PubMed:21783213, PubMed:30900313). Repressed by EDTA (PubMed:21783213).</text>
</comment>
<comment type="biophysicochemical properties">
    <phDependence>
        <text evidence="3">Optimum pH is 5.5-6.</text>
    </phDependence>
</comment>
<comment type="subunit">
    <text evidence="5">Homodimer.</text>
</comment>
<comment type="tissue specificity">
    <text evidence="3">Expressed constitutively in roots, stems, leaves, flowers, siliques and seedlings.</text>
</comment>
<comment type="miscellaneous">
    <text evidence="8">Does not contain the mannose-binding lectin domain present in other members of the family.</text>
</comment>
<comment type="miscellaneous">
    <text evidence="10">The proton donor differs depending on substrates.</text>
</comment>
<accession>G1FNI6</accession>